<dbReference type="EC" id="7.1.2.2" evidence="1"/>
<dbReference type="EMBL" id="CP000260">
    <property type="protein sequence ID" value="ABF33701.1"/>
    <property type="molecule type" value="Genomic_DNA"/>
</dbReference>
<dbReference type="SMR" id="Q1JHN5"/>
<dbReference type="KEGG" id="sph:MGAS10270_Spy0636"/>
<dbReference type="HOGENOM" id="CLU_022398_0_2_9"/>
<dbReference type="Proteomes" id="UP000002436">
    <property type="component" value="Chromosome"/>
</dbReference>
<dbReference type="GO" id="GO:0005886">
    <property type="term" value="C:plasma membrane"/>
    <property type="evidence" value="ECO:0007669"/>
    <property type="project" value="UniProtKB-SubCell"/>
</dbReference>
<dbReference type="GO" id="GO:0045259">
    <property type="term" value="C:proton-transporting ATP synthase complex"/>
    <property type="evidence" value="ECO:0007669"/>
    <property type="project" value="UniProtKB-KW"/>
</dbReference>
<dbReference type="GO" id="GO:0005524">
    <property type="term" value="F:ATP binding"/>
    <property type="evidence" value="ECO:0007669"/>
    <property type="project" value="UniProtKB-UniRule"/>
</dbReference>
<dbReference type="GO" id="GO:0016887">
    <property type="term" value="F:ATP hydrolysis activity"/>
    <property type="evidence" value="ECO:0007669"/>
    <property type="project" value="InterPro"/>
</dbReference>
<dbReference type="GO" id="GO:0046933">
    <property type="term" value="F:proton-transporting ATP synthase activity, rotational mechanism"/>
    <property type="evidence" value="ECO:0007669"/>
    <property type="project" value="UniProtKB-UniRule"/>
</dbReference>
<dbReference type="CDD" id="cd18110">
    <property type="entry name" value="ATP-synt_F1_beta_C"/>
    <property type="match status" value="1"/>
</dbReference>
<dbReference type="CDD" id="cd18115">
    <property type="entry name" value="ATP-synt_F1_beta_N"/>
    <property type="match status" value="1"/>
</dbReference>
<dbReference type="CDD" id="cd01133">
    <property type="entry name" value="F1-ATPase_beta_CD"/>
    <property type="match status" value="1"/>
</dbReference>
<dbReference type="FunFam" id="1.10.1140.10:FF:000001">
    <property type="entry name" value="ATP synthase subunit beta"/>
    <property type="match status" value="1"/>
</dbReference>
<dbReference type="FunFam" id="2.40.10.170:FF:000005">
    <property type="entry name" value="ATP synthase subunit beta"/>
    <property type="match status" value="1"/>
</dbReference>
<dbReference type="FunFam" id="3.40.50.300:FF:000004">
    <property type="entry name" value="ATP synthase subunit beta"/>
    <property type="match status" value="1"/>
</dbReference>
<dbReference type="Gene3D" id="2.40.10.170">
    <property type="match status" value="1"/>
</dbReference>
<dbReference type="Gene3D" id="1.10.1140.10">
    <property type="entry name" value="Bovine Mitochondrial F1-atpase, Atp Synthase Beta Chain, Chain D, domain 3"/>
    <property type="match status" value="1"/>
</dbReference>
<dbReference type="Gene3D" id="3.40.50.300">
    <property type="entry name" value="P-loop containing nucleotide triphosphate hydrolases"/>
    <property type="match status" value="1"/>
</dbReference>
<dbReference type="HAMAP" id="MF_01347">
    <property type="entry name" value="ATP_synth_beta_bact"/>
    <property type="match status" value="1"/>
</dbReference>
<dbReference type="InterPro" id="IPR003593">
    <property type="entry name" value="AAA+_ATPase"/>
</dbReference>
<dbReference type="InterPro" id="IPR055190">
    <property type="entry name" value="ATP-synt_VA_C"/>
</dbReference>
<dbReference type="InterPro" id="IPR005722">
    <property type="entry name" value="ATP_synth_F1_bsu"/>
</dbReference>
<dbReference type="InterPro" id="IPR020003">
    <property type="entry name" value="ATPase_a/bsu_AS"/>
</dbReference>
<dbReference type="InterPro" id="IPR050053">
    <property type="entry name" value="ATPase_alpha/beta_chains"/>
</dbReference>
<dbReference type="InterPro" id="IPR004100">
    <property type="entry name" value="ATPase_F1/V1/A1_a/bsu_N"/>
</dbReference>
<dbReference type="InterPro" id="IPR036121">
    <property type="entry name" value="ATPase_F1/V1/A1_a/bsu_N_sf"/>
</dbReference>
<dbReference type="InterPro" id="IPR000194">
    <property type="entry name" value="ATPase_F1/V1/A1_a/bsu_nucl-bd"/>
</dbReference>
<dbReference type="InterPro" id="IPR024034">
    <property type="entry name" value="ATPase_F1/V1_b/a_C"/>
</dbReference>
<dbReference type="InterPro" id="IPR027417">
    <property type="entry name" value="P-loop_NTPase"/>
</dbReference>
<dbReference type="NCBIfam" id="TIGR01039">
    <property type="entry name" value="atpD"/>
    <property type="match status" value="1"/>
</dbReference>
<dbReference type="PANTHER" id="PTHR15184">
    <property type="entry name" value="ATP SYNTHASE"/>
    <property type="match status" value="1"/>
</dbReference>
<dbReference type="PANTHER" id="PTHR15184:SF71">
    <property type="entry name" value="ATP SYNTHASE SUBUNIT BETA, MITOCHONDRIAL"/>
    <property type="match status" value="1"/>
</dbReference>
<dbReference type="Pfam" id="PF00006">
    <property type="entry name" value="ATP-synt_ab"/>
    <property type="match status" value="1"/>
</dbReference>
<dbReference type="Pfam" id="PF02874">
    <property type="entry name" value="ATP-synt_ab_N"/>
    <property type="match status" value="1"/>
</dbReference>
<dbReference type="Pfam" id="PF22919">
    <property type="entry name" value="ATP-synt_VA_C"/>
    <property type="match status" value="1"/>
</dbReference>
<dbReference type="SMART" id="SM00382">
    <property type="entry name" value="AAA"/>
    <property type="match status" value="1"/>
</dbReference>
<dbReference type="SUPFAM" id="SSF47917">
    <property type="entry name" value="C-terminal domain of alpha and beta subunits of F1 ATP synthase"/>
    <property type="match status" value="1"/>
</dbReference>
<dbReference type="SUPFAM" id="SSF50615">
    <property type="entry name" value="N-terminal domain of alpha and beta subunits of F1 ATP synthase"/>
    <property type="match status" value="1"/>
</dbReference>
<dbReference type="SUPFAM" id="SSF52540">
    <property type="entry name" value="P-loop containing nucleoside triphosphate hydrolases"/>
    <property type="match status" value="1"/>
</dbReference>
<dbReference type="PROSITE" id="PS00152">
    <property type="entry name" value="ATPASE_ALPHA_BETA"/>
    <property type="match status" value="1"/>
</dbReference>
<comment type="function">
    <text evidence="1">Produces ATP from ADP in the presence of a proton gradient across the membrane. The catalytic sites are hosted primarily by the beta subunits.</text>
</comment>
<comment type="catalytic activity">
    <reaction evidence="1">
        <text>ATP + H2O + 4 H(+)(in) = ADP + phosphate + 5 H(+)(out)</text>
        <dbReference type="Rhea" id="RHEA:57720"/>
        <dbReference type="ChEBI" id="CHEBI:15377"/>
        <dbReference type="ChEBI" id="CHEBI:15378"/>
        <dbReference type="ChEBI" id="CHEBI:30616"/>
        <dbReference type="ChEBI" id="CHEBI:43474"/>
        <dbReference type="ChEBI" id="CHEBI:456216"/>
        <dbReference type="EC" id="7.1.2.2"/>
    </reaction>
</comment>
<comment type="subunit">
    <text evidence="1">F-type ATPases have 2 components, CF(1) - the catalytic core - and CF(0) - the membrane proton channel. CF(1) has five subunits: alpha(3), beta(3), gamma(1), delta(1), epsilon(1). CF(0) has three main subunits: a(1), b(2) and c(9-12). The alpha and beta chains form an alternating ring which encloses part of the gamma chain. CF(1) is attached to CF(0) by a central stalk formed by the gamma and epsilon chains, while a peripheral stalk is formed by the delta and b chains.</text>
</comment>
<comment type="subcellular location">
    <subcellularLocation>
        <location evidence="1">Cell membrane</location>
        <topology evidence="1">Peripheral membrane protein</topology>
    </subcellularLocation>
</comment>
<comment type="similarity">
    <text evidence="1">Belongs to the ATPase alpha/beta chains family.</text>
</comment>
<proteinExistence type="inferred from homology"/>
<organism>
    <name type="scientific">Streptococcus pyogenes serotype M2 (strain MGAS10270)</name>
    <dbReference type="NCBI Taxonomy" id="370552"/>
    <lineage>
        <taxon>Bacteria</taxon>
        <taxon>Bacillati</taxon>
        <taxon>Bacillota</taxon>
        <taxon>Bacilli</taxon>
        <taxon>Lactobacillales</taxon>
        <taxon>Streptococcaceae</taxon>
        <taxon>Streptococcus</taxon>
    </lineage>
</organism>
<reference key="1">
    <citation type="journal article" date="2006" name="Proc. Natl. Acad. Sci. U.S.A.">
        <title>Molecular genetic anatomy of inter- and intraserotype variation in the human bacterial pathogen group A Streptococcus.</title>
        <authorList>
            <person name="Beres S.B."/>
            <person name="Richter E.W."/>
            <person name="Nagiec M.J."/>
            <person name="Sumby P."/>
            <person name="Porcella S.F."/>
            <person name="DeLeo F.R."/>
            <person name="Musser J.M."/>
        </authorList>
    </citation>
    <scope>NUCLEOTIDE SEQUENCE [LARGE SCALE GENOMIC DNA]</scope>
    <source>
        <strain>MGAS10270</strain>
    </source>
</reference>
<sequence>MSSGKIAQVVGPVVDVMFASGDKLPEINNALIVYKDSDKKQKIVLEVALELGDGMVRTIAMESTDGLTRGLEVLDTGRAISVPVGKETLGRVFNVLGETIDLEEPFAEDVDRQPIHKKAPSFDELSTSSEILETGIKVIDLLAPYLKGGKVGLFGGAGVGKTVLIQELIHNIAQEHGGISVFTGVGERTREGNDLYWEMKESGVIEKTAMVFGQMNEPPGARMRVALTGLTIAEYFRDVEGQDVLLFIDNIFRFTQAGSEVSALLGRMPSAVGYQPTLATEMGQLQERITSTQKGSVTSIQAIYVPADDYTDPAPATAFAHLDSTTNLERKLTQMGIYPAVDPLASSSRALSPEIVGEEHYAVATEVQRVLQRYRELQDIIAILGMDELSDEEKTLVGRARRIQFFLSQNFNVAEQFTGLPGSYVPVAETVRGFKEILEGKYDHLPEDAFRSVGPIEDVIKKAEKMGF</sequence>
<feature type="chain" id="PRO_0000254395" description="ATP synthase subunit beta">
    <location>
        <begin position="1"/>
        <end position="468"/>
    </location>
</feature>
<feature type="binding site" evidence="1">
    <location>
        <begin position="155"/>
        <end position="162"/>
    </location>
    <ligand>
        <name>ATP</name>
        <dbReference type="ChEBI" id="CHEBI:30616"/>
    </ligand>
</feature>
<keyword id="KW-0066">ATP synthesis</keyword>
<keyword id="KW-0067">ATP-binding</keyword>
<keyword id="KW-1003">Cell membrane</keyword>
<keyword id="KW-0139">CF(1)</keyword>
<keyword id="KW-0375">Hydrogen ion transport</keyword>
<keyword id="KW-0406">Ion transport</keyword>
<keyword id="KW-0472">Membrane</keyword>
<keyword id="KW-0547">Nucleotide-binding</keyword>
<keyword id="KW-1278">Translocase</keyword>
<keyword id="KW-0813">Transport</keyword>
<gene>
    <name evidence="1" type="primary">atpD</name>
    <name type="ordered locus">MGAS10270_Spy0636</name>
</gene>
<evidence type="ECO:0000255" key="1">
    <source>
        <dbReference type="HAMAP-Rule" id="MF_01347"/>
    </source>
</evidence>
<protein>
    <recommendedName>
        <fullName evidence="1">ATP synthase subunit beta</fullName>
        <ecNumber evidence="1">7.1.2.2</ecNumber>
    </recommendedName>
    <alternativeName>
        <fullName evidence="1">ATP synthase F1 sector subunit beta</fullName>
    </alternativeName>
    <alternativeName>
        <fullName evidence="1">F-ATPase subunit beta</fullName>
    </alternativeName>
</protein>
<accession>Q1JHN5</accession>
<name>ATPB_STRPD</name>